<organism>
    <name type="scientific">Saccharomyces cerevisiae (strain AWRI1631)</name>
    <name type="common">Baker's yeast</name>
    <dbReference type="NCBI Taxonomy" id="545124"/>
    <lineage>
        <taxon>Eukaryota</taxon>
        <taxon>Fungi</taxon>
        <taxon>Dikarya</taxon>
        <taxon>Ascomycota</taxon>
        <taxon>Saccharomycotina</taxon>
        <taxon>Saccharomycetes</taxon>
        <taxon>Saccharomycetales</taxon>
        <taxon>Saccharomycetaceae</taxon>
        <taxon>Saccharomyces</taxon>
    </lineage>
</organism>
<sequence>MRLISKVLVKTNCLEVGMRRAPQWYSHYSTTAGNARVNKKGSKVVPVLTGLALASIFAKKWYDDSQIKKADATSVAVDASISAFPKKMGPPQWPFSTQYELIGKGVRCVSSITFKAYGLGIYVAAEDKHLVSEVLDSKFLSQAFIDTAAPPSPENSHQDNLRAALNDPAKAPILINNLLDSGIRLMSKNTPIKAGSFKLLMDGTKKSVLKNPDSQSQDKDRLEAGFQELHDCFRSVKGLVARDDDFFIELNKDCSMNLSYYARKKDEFVILGTVKEPLIGKLLFAHYLAAVDPPSPEARKEVIDALVSLS</sequence>
<evidence type="ECO:0000250" key="1"/>
<evidence type="ECO:0000255" key="2"/>
<evidence type="ECO:0000305" key="3"/>
<reference key="1">
    <citation type="journal article" date="2008" name="FEMS Yeast Res.">
        <title>Comparative genome analysis of a Saccharomyces cerevisiae wine strain.</title>
        <authorList>
            <person name="Borneman A.R."/>
            <person name="Forgan A.H."/>
            <person name="Pretorius I.S."/>
            <person name="Chambers P.J."/>
        </authorList>
    </citation>
    <scope>NUCLEOTIDE SEQUENCE [LARGE SCALE GENOMIC DNA]</scope>
    <source>
        <strain>AWRI1631</strain>
    </source>
</reference>
<gene>
    <name type="primary">AIM46</name>
    <name type="synonym">FMP34</name>
    <name type="ORF">AWRI1631_82520</name>
</gene>
<protein>
    <recommendedName>
        <fullName>Altered inheritance of mitochondria protein 46, mitochondrial</fullName>
    </recommendedName>
</protein>
<accession>B5VKC8</accession>
<comment type="subcellular location">
    <subcellularLocation>
        <location evidence="1">Mitochondrion</location>
    </subcellularLocation>
</comment>
<comment type="similarity">
    <text evidence="3">Belongs to the AIM18/AIM46 family.</text>
</comment>
<keyword id="KW-0496">Mitochondrion</keyword>
<keyword id="KW-0809">Transit peptide</keyword>
<name>AIM46_YEAS6</name>
<feature type="transit peptide" description="Mitochondrion" evidence="2">
    <location>
        <begin position="1"/>
        <end position="20"/>
    </location>
</feature>
<feature type="chain" id="PRO_0000399563" description="Altered inheritance of mitochondria protein 46, mitochondrial">
    <location>
        <begin position="21"/>
        <end position="310"/>
    </location>
</feature>
<proteinExistence type="inferred from homology"/>
<dbReference type="EMBL" id="ABSV01001153">
    <property type="protein sequence ID" value="EDZ71626.1"/>
    <property type="molecule type" value="Genomic_DNA"/>
</dbReference>
<dbReference type="SMR" id="B5VKC8"/>
<dbReference type="Proteomes" id="UP000008988">
    <property type="component" value="Unassembled WGS sequence"/>
</dbReference>
<dbReference type="GO" id="GO:0005739">
    <property type="term" value="C:mitochondrion"/>
    <property type="evidence" value="ECO:0007669"/>
    <property type="project" value="UniProtKB-SubCell"/>
</dbReference>
<dbReference type="GO" id="GO:0016872">
    <property type="term" value="F:intramolecular lyase activity"/>
    <property type="evidence" value="ECO:0007669"/>
    <property type="project" value="InterPro"/>
</dbReference>
<dbReference type="Gene3D" id="3.50.70.10">
    <property type="match status" value="1"/>
</dbReference>
<dbReference type="InterPro" id="IPR016087">
    <property type="entry name" value="Chalcone_isomerase"/>
</dbReference>
<dbReference type="InterPro" id="IPR016088">
    <property type="entry name" value="Chalcone_isomerase_3-sand"/>
</dbReference>
<dbReference type="InterPro" id="IPR036298">
    <property type="entry name" value="Chalcone_isomerase_sf"/>
</dbReference>
<dbReference type="Pfam" id="PF16035">
    <property type="entry name" value="Chalcone_2"/>
    <property type="match status" value="1"/>
</dbReference>
<dbReference type="SUPFAM" id="SSF54626">
    <property type="entry name" value="Chalcone isomerase"/>
    <property type="match status" value="1"/>
</dbReference>